<proteinExistence type="inferred from homology"/>
<keyword id="KW-1003">Cell membrane</keyword>
<keyword id="KW-1015">Disulfide bond</keyword>
<keyword id="KW-0297">G-protein coupled receptor</keyword>
<keyword id="KW-0325">Glycoprotein</keyword>
<keyword id="KW-0449">Lipoprotein</keyword>
<keyword id="KW-0472">Membrane</keyword>
<keyword id="KW-0564">Palmitate</keyword>
<keyword id="KW-0597">Phosphoprotein</keyword>
<keyword id="KW-0675">Receptor</keyword>
<keyword id="KW-1185">Reference proteome</keyword>
<keyword id="KW-0807">Transducer</keyword>
<keyword id="KW-0812">Transmembrane</keyword>
<keyword id="KW-1133">Transmembrane helix</keyword>
<organism>
    <name type="scientific">Ovis aries</name>
    <name type="common">Sheep</name>
    <dbReference type="NCBI Taxonomy" id="9940"/>
    <lineage>
        <taxon>Eukaryota</taxon>
        <taxon>Metazoa</taxon>
        <taxon>Chordata</taxon>
        <taxon>Craniata</taxon>
        <taxon>Vertebrata</taxon>
        <taxon>Euteleostomi</taxon>
        <taxon>Mammalia</taxon>
        <taxon>Eutheria</taxon>
        <taxon>Laurasiatheria</taxon>
        <taxon>Artiodactyla</taxon>
        <taxon>Ruminantia</taxon>
        <taxon>Pecora</taxon>
        <taxon>Bovidae</taxon>
        <taxon>Caprinae</taxon>
        <taxon>Ovis</taxon>
    </lineage>
</organism>
<evidence type="ECO:0000250" key="1"/>
<evidence type="ECO:0000250" key="2">
    <source>
        <dbReference type="UniProtKB" id="Q62463"/>
    </source>
</evidence>
<evidence type="ECO:0000255" key="3"/>
<evidence type="ECO:0000255" key="4">
    <source>
        <dbReference type="PROSITE-ProRule" id="PRU00521"/>
    </source>
</evidence>
<evidence type="ECO:0000256" key="5">
    <source>
        <dbReference type="SAM" id="MobiDB-lite"/>
    </source>
</evidence>
<evidence type="ECO:0000305" key="6"/>
<feature type="chain" id="PRO_0000070202" description="Vasopressin V1a receptor">
    <location>
        <begin position="1"/>
        <end position="418"/>
    </location>
</feature>
<feature type="topological domain" description="Extracellular" evidence="3">
    <location>
        <begin position="1"/>
        <end position="51"/>
    </location>
</feature>
<feature type="transmembrane region" description="Helical; Name=1" evidence="3">
    <location>
        <begin position="52"/>
        <end position="75"/>
    </location>
</feature>
<feature type="topological domain" description="Cytoplasmic" evidence="3">
    <location>
        <begin position="76"/>
        <end position="87"/>
    </location>
</feature>
<feature type="transmembrane region" description="Helical; Name=2" evidence="3">
    <location>
        <begin position="88"/>
        <end position="109"/>
    </location>
</feature>
<feature type="topological domain" description="Extracellular" evidence="3">
    <location>
        <begin position="110"/>
        <end position="124"/>
    </location>
</feature>
<feature type="transmembrane region" description="Helical; Name=3" evidence="3">
    <location>
        <begin position="125"/>
        <end position="146"/>
    </location>
</feature>
<feature type="topological domain" description="Cytoplasmic" evidence="3">
    <location>
        <begin position="147"/>
        <end position="167"/>
    </location>
</feature>
<feature type="transmembrane region" description="Helical; Name=4" evidence="3">
    <location>
        <begin position="168"/>
        <end position="189"/>
    </location>
</feature>
<feature type="topological domain" description="Extracellular" evidence="3">
    <location>
        <begin position="190"/>
        <end position="217"/>
    </location>
</feature>
<feature type="transmembrane region" description="Helical; Name=5" evidence="3">
    <location>
        <begin position="218"/>
        <end position="238"/>
    </location>
</feature>
<feature type="topological domain" description="Cytoplasmic" evidence="3">
    <location>
        <begin position="239"/>
        <end position="293"/>
    </location>
</feature>
<feature type="transmembrane region" description="Helical; Name=6" evidence="3">
    <location>
        <begin position="294"/>
        <end position="313"/>
    </location>
</feature>
<feature type="topological domain" description="Extracellular" evidence="3">
    <location>
        <begin position="314"/>
        <end position="331"/>
    </location>
</feature>
<feature type="transmembrane region" description="Helical; Name=7" evidence="3">
    <location>
        <begin position="332"/>
        <end position="351"/>
    </location>
</feature>
<feature type="topological domain" description="Cytoplasmic" evidence="3">
    <location>
        <begin position="352"/>
        <end position="418"/>
    </location>
</feature>
<feature type="region of interest" description="Disordered" evidence="5">
    <location>
        <begin position="1"/>
        <end position="20"/>
    </location>
</feature>
<feature type="region of interest" description="Disordered" evidence="5">
    <location>
        <begin position="377"/>
        <end position="418"/>
    </location>
</feature>
<feature type="compositionally biased region" description="Low complexity" evidence="5">
    <location>
        <begin position="1"/>
        <end position="15"/>
    </location>
</feature>
<feature type="compositionally biased region" description="Polar residues" evidence="5">
    <location>
        <begin position="383"/>
        <end position="399"/>
    </location>
</feature>
<feature type="modified residue" description="Phosphoserine" evidence="2">
    <location>
        <position position="404"/>
    </location>
</feature>
<feature type="lipid moiety-binding region" description="S-palmitoyl cysteine" evidence="1">
    <location>
        <position position="365"/>
    </location>
</feature>
<feature type="lipid moiety-binding region" description="S-palmitoyl cysteine" evidence="1">
    <location>
        <position position="366"/>
    </location>
</feature>
<feature type="glycosylation site" description="N-linked (GlcNAc...) asparagine" evidence="3">
    <location>
        <position position="13"/>
    </location>
</feature>
<feature type="glycosylation site" description="N-linked (GlcNAc...) asparagine" evidence="3">
    <location>
        <position position="26"/>
    </location>
</feature>
<feature type="glycosylation site" description="N-linked (GlcNAc...) asparagine" evidence="3">
    <location>
        <position position="195"/>
    </location>
</feature>
<feature type="glycosylation site" description="N-linked (GlcNAc...) asparagine" evidence="3">
    <location>
        <position position="319"/>
    </location>
</feature>
<feature type="disulfide bond" evidence="4">
    <location>
        <begin position="123"/>
        <end position="202"/>
    </location>
</feature>
<name>V1AR_SHEEP</name>
<gene>
    <name type="primary">AVPR1A</name>
</gene>
<sequence length="418" mass="46521">MRFSGSPSPGPSNSSRWWPLDAGDANTSGDLAGLGEDGGPQADTRNEELAKLEIAVLAVIFVVAVLGNSSVLLALHRTPRKTSRMHLFIRHLSLADLAVAFFQVLPQLGWDITYRFRGPDGLCRVVKHMQVFAMFASAYMLVVMTADRYIAVCHPLKTLQQPARRSRLMIAAAWVLSFVLSTPQYFVFSMVEVSNVTKTYDCWANFIHPWGLPAYVTWMTGSVFVAPVVILGTCYGFICYHIWRKVRGKTAGRQGGPAEGAGESALYRGVLHARCVSSVKTISRAKIRTVKMTFVIVTAYIVCWAPFFIIQMWSAWDKNFSWVESENPATAIPALLASLNSCCNPWIYMFFSGHLLQDCAQSFPCCQNVKRTFTREGSDSMSRRQTSFTNNRSPTNSMGTWKDSPKSSKSIKFIPVST</sequence>
<reference key="1">
    <citation type="journal article" date="1995" name="Biochim. Biophys. Acta">
        <title>Molecular cloning and sequencing of the gene encoding a sheep arginine vasopressin type 1a receptor.</title>
        <authorList>
            <person name="Hutchins A.-M."/>
            <person name="Phillips P.A."/>
            <person name="Venter D.J."/>
            <person name="Burrell L.M."/>
            <person name="Johnston C.I."/>
        </authorList>
    </citation>
    <scope>NUCLEOTIDE SEQUENCE [GENOMIC DNA]</scope>
</reference>
<protein>
    <recommendedName>
        <fullName>Vasopressin V1a receptor</fullName>
        <shortName>V1aR</shortName>
    </recommendedName>
    <alternativeName>
        <fullName>AVPR V1a</fullName>
    </alternativeName>
    <alternativeName>
        <fullName>Antidiuretic hormone receptor 1a</fullName>
    </alternativeName>
    <alternativeName>
        <fullName>Vascular/hepatic-type arginine vasopressin receptor</fullName>
    </alternativeName>
</protein>
<accession>P48043</accession>
<comment type="function">
    <text>Receptor for arginine vasopressin. The activity of this receptor is mediated by G proteins which activate a phosphatidyl-inositol-calcium second messenger system.</text>
</comment>
<comment type="subcellular location">
    <subcellularLocation>
        <location>Cell membrane</location>
        <topology>Multi-pass membrane protein</topology>
    </subcellularLocation>
</comment>
<comment type="similarity">
    <text evidence="4">Belongs to the G-protein coupled receptor 1 family. Vasopressin/oxytocin receptor subfamily.</text>
</comment>
<comment type="sequence caution" evidence="6">
    <conflict type="erroneous initiation">
        <sequence resource="EMBL-CDS" id="AAC41627"/>
    </conflict>
</comment>
<dbReference type="EMBL" id="L41502">
    <property type="protein sequence ID" value="AAC41628.1"/>
    <property type="molecule type" value="Genomic_DNA"/>
</dbReference>
<dbReference type="EMBL" id="L41502">
    <property type="protein sequence ID" value="AAC41627.1"/>
    <property type="status" value="ALT_INIT"/>
    <property type="molecule type" value="Genomic_DNA"/>
</dbReference>
<dbReference type="PIR" id="S59601">
    <property type="entry name" value="S59601"/>
</dbReference>
<dbReference type="SMR" id="P48043"/>
<dbReference type="STRING" id="9940.ENSOARP00000004394"/>
<dbReference type="GlyCosmos" id="P48043">
    <property type="glycosylation" value="4 sites, No reported glycans"/>
</dbReference>
<dbReference type="PaxDb" id="9940-ENSOARP00000004394"/>
<dbReference type="eggNOG" id="KOG3656">
    <property type="taxonomic scope" value="Eukaryota"/>
</dbReference>
<dbReference type="Proteomes" id="UP000002356">
    <property type="component" value="Unplaced"/>
</dbReference>
<dbReference type="GO" id="GO:0005886">
    <property type="term" value="C:plasma membrane"/>
    <property type="evidence" value="ECO:0007669"/>
    <property type="project" value="UniProtKB-SubCell"/>
</dbReference>
<dbReference type="GO" id="GO:0042277">
    <property type="term" value="F:peptide binding"/>
    <property type="evidence" value="ECO:0007669"/>
    <property type="project" value="TreeGrafter"/>
</dbReference>
<dbReference type="GO" id="GO:0005000">
    <property type="term" value="F:vasopressin receptor activity"/>
    <property type="evidence" value="ECO:0007669"/>
    <property type="project" value="InterPro"/>
</dbReference>
<dbReference type="GO" id="GO:0032870">
    <property type="term" value="P:cellular response to hormone stimulus"/>
    <property type="evidence" value="ECO:0007669"/>
    <property type="project" value="TreeGrafter"/>
</dbReference>
<dbReference type="GO" id="GO:0045907">
    <property type="term" value="P:positive regulation of vasoconstriction"/>
    <property type="evidence" value="ECO:0007669"/>
    <property type="project" value="TreeGrafter"/>
</dbReference>
<dbReference type="GO" id="GO:0001992">
    <property type="term" value="P:regulation of systemic arterial blood pressure by vasopressin"/>
    <property type="evidence" value="ECO:0007669"/>
    <property type="project" value="TreeGrafter"/>
</dbReference>
<dbReference type="CDD" id="cd15385">
    <property type="entry name" value="7tmA_V1aR"/>
    <property type="match status" value="1"/>
</dbReference>
<dbReference type="FunFam" id="1.20.1070.10:FF:000094">
    <property type="entry name" value="Vasopressin V1a receptor"/>
    <property type="match status" value="1"/>
</dbReference>
<dbReference type="Gene3D" id="1.20.1070.10">
    <property type="entry name" value="Rhodopsin 7-helix transmembrane proteins"/>
    <property type="match status" value="1"/>
</dbReference>
<dbReference type="InterPro" id="IPR000276">
    <property type="entry name" value="GPCR_Rhodpsn"/>
</dbReference>
<dbReference type="InterPro" id="IPR017452">
    <property type="entry name" value="GPCR_Rhodpsn_7TM"/>
</dbReference>
<dbReference type="InterPro" id="IPR015076">
    <property type="entry name" value="V1R_C"/>
</dbReference>
<dbReference type="InterPro" id="IPR001817">
    <property type="entry name" value="Vasoprsn_rcpt"/>
</dbReference>
<dbReference type="InterPro" id="IPR001224">
    <property type="entry name" value="Vprs_V1A_rcpt"/>
</dbReference>
<dbReference type="PANTHER" id="PTHR24241">
    <property type="entry name" value="NEUROPEPTIDE RECEPTOR-RELATED G-PROTEIN COUPLED RECEPTOR"/>
    <property type="match status" value="1"/>
</dbReference>
<dbReference type="PANTHER" id="PTHR24241:SF17">
    <property type="entry name" value="VASOPRESSIN V1A RECEPTOR"/>
    <property type="match status" value="1"/>
</dbReference>
<dbReference type="Pfam" id="PF00001">
    <property type="entry name" value="7tm_1"/>
    <property type="match status" value="1"/>
</dbReference>
<dbReference type="Pfam" id="PF08983">
    <property type="entry name" value="V1R_C"/>
    <property type="match status" value="1"/>
</dbReference>
<dbReference type="PRINTS" id="PR00237">
    <property type="entry name" value="GPCRRHODOPSN"/>
</dbReference>
<dbReference type="PRINTS" id="PR00896">
    <property type="entry name" value="VASOPRESSINR"/>
</dbReference>
<dbReference type="PRINTS" id="PR00752">
    <property type="entry name" value="VASOPRSNV1AR"/>
</dbReference>
<dbReference type="SMART" id="SM01164">
    <property type="entry name" value="DUF1856"/>
    <property type="match status" value="1"/>
</dbReference>
<dbReference type="SUPFAM" id="SSF81321">
    <property type="entry name" value="Family A G protein-coupled receptor-like"/>
    <property type="match status" value="1"/>
</dbReference>
<dbReference type="PROSITE" id="PS00237">
    <property type="entry name" value="G_PROTEIN_RECEP_F1_1"/>
    <property type="match status" value="1"/>
</dbReference>
<dbReference type="PROSITE" id="PS50262">
    <property type="entry name" value="G_PROTEIN_RECEP_F1_2"/>
    <property type="match status" value="1"/>
</dbReference>